<proteinExistence type="inferred from homology"/>
<keyword id="KW-0408">Iron</keyword>
<sequence length="91" mass="10376">MARMIHCAKLGKEAEGLDFPPLPGELGKRLYESVSKQAWQDWLKQQTMLINENRLNMADPRARQYLMKQTEKYFFGEGADQASGYVPPAQG</sequence>
<gene>
    <name type="ordered locus">BMA10247_1533</name>
</gene>
<organism>
    <name type="scientific">Burkholderia mallei (strain NCTC 10247)</name>
    <dbReference type="NCBI Taxonomy" id="320389"/>
    <lineage>
        <taxon>Bacteria</taxon>
        <taxon>Pseudomonadati</taxon>
        <taxon>Pseudomonadota</taxon>
        <taxon>Betaproteobacteria</taxon>
        <taxon>Burkholderiales</taxon>
        <taxon>Burkholderiaceae</taxon>
        <taxon>Burkholderia</taxon>
        <taxon>pseudomallei group</taxon>
    </lineage>
</organism>
<name>FETP_BURM7</name>
<reference key="1">
    <citation type="journal article" date="2010" name="Genome Biol. Evol.">
        <title>Continuing evolution of Burkholderia mallei through genome reduction and large-scale rearrangements.</title>
        <authorList>
            <person name="Losada L."/>
            <person name="Ronning C.M."/>
            <person name="DeShazer D."/>
            <person name="Woods D."/>
            <person name="Fedorova N."/>
            <person name="Kim H.S."/>
            <person name="Shabalina S.A."/>
            <person name="Pearson T.R."/>
            <person name="Brinkac L."/>
            <person name="Tan P."/>
            <person name="Nandi T."/>
            <person name="Crabtree J."/>
            <person name="Badger J."/>
            <person name="Beckstrom-Sternberg S."/>
            <person name="Saqib M."/>
            <person name="Schutzer S.E."/>
            <person name="Keim P."/>
            <person name="Nierman W.C."/>
        </authorList>
    </citation>
    <scope>NUCLEOTIDE SEQUENCE [LARGE SCALE GENOMIC DNA]</scope>
    <source>
        <strain>NCTC 10247</strain>
    </source>
</reference>
<feature type="chain" id="PRO_1000045022" description="Probable Fe(2+)-trafficking protein">
    <location>
        <begin position="1"/>
        <end position="91"/>
    </location>
</feature>
<dbReference type="EMBL" id="CP000548">
    <property type="protein sequence ID" value="ABO07125.1"/>
    <property type="molecule type" value="Genomic_DNA"/>
</dbReference>
<dbReference type="RefSeq" id="WP_004193961.1">
    <property type="nucleotide sequence ID" value="NZ_CP007802.1"/>
</dbReference>
<dbReference type="BMRB" id="A3MLE3"/>
<dbReference type="SMR" id="A3MLE3"/>
<dbReference type="KEGG" id="bmaz:BM44_1622"/>
<dbReference type="KEGG" id="bmn:BMA10247_1533"/>
<dbReference type="PATRIC" id="fig|320389.8.peg.1817"/>
<dbReference type="GO" id="GO:0005829">
    <property type="term" value="C:cytosol"/>
    <property type="evidence" value="ECO:0007669"/>
    <property type="project" value="TreeGrafter"/>
</dbReference>
<dbReference type="GO" id="GO:0005506">
    <property type="term" value="F:iron ion binding"/>
    <property type="evidence" value="ECO:0007669"/>
    <property type="project" value="UniProtKB-UniRule"/>
</dbReference>
<dbReference type="GO" id="GO:0034599">
    <property type="term" value="P:cellular response to oxidative stress"/>
    <property type="evidence" value="ECO:0007669"/>
    <property type="project" value="TreeGrafter"/>
</dbReference>
<dbReference type="FunFam" id="1.10.3880.10:FF:000001">
    <property type="entry name" value="Probable Fe(2+)-trafficking protein"/>
    <property type="match status" value="1"/>
</dbReference>
<dbReference type="Gene3D" id="1.10.3880.10">
    <property type="entry name" value="Fe(II) trafficking protein YggX"/>
    <property type="match status" value="1"/>
</dbReference>
<dbReference type="HAMAP" id="MF_00686">
    <property type="entry name" value="Fe_traffic_YggX"/>
    <property type="match status" value="1"/>
</dbReference>
<dbReference type="InterPro" id="IPR007457">
    <property type="entry name" value="Fe_traffick_prot_YggX"/>
</dbReference>
<dbReference type="InterPro" id="IPR036766">
    <property type="entry name" value="Fe_traffick_prot_YggX_sf"/>
</dbReference>
<dbReference type="NCBIfam" id="NF003817">
    <property type="entry name" value="PRK05408.1"/>
    <property type="match status" value="1"/>
</dbReference>
<dbReference type="PANTHER" id="PTHR36965">
    <property type="entry name" value="FE(2+)-TRAFFICKING PROTEIN-RELATED"/>
    <property type="match status" value="1"/>
</dbReference>
<dbReference type="PANTHER" id="PTHR36965:SF1">
    <property type="entry name" value="FE(2+)-TRAFFICKING PROTEIN-RELATED"/>
    <property type="match status" value="1"/>
</dbReference>
<dbReference type="Pfam" id="PF04362">
    <property type="entry name" value="Iron_traffic"/>
    <property type="match status" value="1"/>
</dbReference>
<dbReference type="PIRSF" id="PIRSF029827">
    <property type="entry name" value="Fe_traffic_YggX"/>
    <property type="match status" value="1"/>
</dbReference>
<dbReference type="SUPFAM" id="SSF111148">
    <property type="entry name" value="YggX-like"/>
    <property type="match status" value="1"/>
</dbReference>
<evidence type="ECO:0000255" key="1">
    <source>
        <dbReference type="HAMAP-Rule" id="MF_00686"/>
    </source>
</evidence>
<protein>
    <recommendedName>
        <fullName evidence="1">Probable Fe(2+)-trafficking protein</fullName>
    </recommendedName>
</protein>
<accession>A3MLE3</accession>
<comment type="function">
    <text evidence="1">Could be a mediator in iron transactions between iron acquisition and iron-requiring processes, such as synthesis and/or repair of Fe-S clusters in biosynthetic enzymes.</text>
</comment>
<comment type="similarity">
    <text evidence="1">Belongs to the Fe(2+)-trafficking protein family.</text>
</comment>